<sequence>MRIKARIGVENSLTDVQQALKQQGHEVVTLNSEQDAQGCDCCVVTGQDSNMMGIADASIKGSVITAHGLTTDDICQQVESRT</sequence>
<gene>
    <name type="ordered locus">BAMEG_3182</name>
</gene>
<protein>
    <recommendedName>
        <fullName evidence="1">UPF0180 protein BAMEG_3182</fullName>
    </recommendedName>
</protein>
<comment type="similarity">
    <text evidence="1">Belongs to the UPF0180 family.</text>
</comment>
<feature type="chain" id="PRO_1000197841" description="UPF0180 protein BAMEG_3182">
    <location>
        <begin position="1"/>
        <end position="82"/>
    </location>
</feature>
<organism>
    <name type="scientific">Bacillus anthracis (strain CDC 684 / NRRL 3495)</name>
    <dbReference type="NCBI Taxonomy" id="568206"/>
    <lineage>
        <taxon>Bacteria</taxon>
        <taxon>Bacillati</taxon>
        <taxon>Bacillota</taxon>
        <taxon>Bacilli</taxon>
        <taxon>Bacillales</taxon>
        <taxon>Bacillaceae</taxon>
        <taxon>Bacillus</taxon>
        <taxon>Bacillus cereus group</taxon>
    </lineage>
</organism>
<evidence type="ECO:0000255" key="1">
    <source>
        <dbReference type="HAMAP-Rule" id="MF_00506"/>
    </source>
</evidence>
<accession>C3L9R4</accession>
<name>Y3182_BACAC</name>
<dbReference type="EMBL" id="CP001215">
    <property type="protein sequence ID" value="ACP14054.1"/>
    <property type="molecule type" value="Genomic_DNA"/>
</dbReference>
<dbReference type="RefSeq" id="WP_001220365.1">
    <property type="nucleotide sequence ID" value="NC_012581.1"/>
</dbReference>
<dbReference type="KEGG" id="bah:BAMEG_3182"/>
<dbReference type="HOGENOM" id="CLU_187365_0_0_9"/>
<dbReference type="HAMAP" id="MF_00506">
    <property type="entry name" value="UPF0180"/>
    <property type="match status" value="1"/>
</dbReference>
<dbReference type="InterPro" id="IPR005370">
    <property type="entry name" value="UPF0180"/>
</dbReference>
<dbReference type="NCBIfam" id="NF002845">
    <property type="entry name" value="PRK03094.1"/>
    <property type="match status" value="1"/>
</dbReference>
<dbReference type="Pfam" id="PF03698">
    <property type="entry name" value="UPF0180"/>
    <property type="match status" value="1"/>
</dbReference>
<proteinExistence type="inferred from homology"/>
<reference key="1">
    <citation type="submission" date="2008-10" db="EMBL/GenBank/DDBJ databases">
        <title>Genome sequence of Bacillus anthracis str. CDC 684.</title>
        <authorList>
            <person name="Dodson R.J."/>
            <person name="Munk A.C."/>
            <person name="Brettin T."/>
            <person name="Bruce D."/>
            <person name="Detter C."/>
            <person name="Tapia R."/>
            <person name="Han C."/>
            <person name="Sutton G."/>
            <person name="Sims D."/>
        </authorList>
    </citation>
    <scope>NUCLEOTIDE SEQUENCE [LARGE SCALE GENOMIC DNA]</scope>
    <source>
        <strain>CDC 684 / NRRL 3495</strain>
    </source>
</reference>